<proteinExistence type="inferred from homology"/>
<gene>
    <name evidence="1" type="primary">dapD</name>
    <name type="ordered locus">RF_1073</name>
</gene>
<organism>
    <name type="scientific">Rickettsia felis (strain ATCC VR-1525 / URRWXCal2)</name>
    <name type="common">Rickettsia azadi</name>
    <dbReference type="NCBI Taxonomy" id="315456"/>
    <lineage>
        <taxon>Bacteria</taxon>
        <taxon>Pseudomonadati</taxon>
        <taxon>Pseudomonadota</taxon>
        <taxon>Alphaproteobacteria</taxon>
        <taxon>Rickettsiales</taxon>
        <taxon>Rickettsiaceae</taxon>
        <taxon>Rickettsieae</taxon>
        <taxon>Rickettsia</taxon>
        <taxon>spotted fever group</taxon>
    </lineage>
</organism>
<evidence type="ECO:0000255" key="1">
    <source>
        <dbReference type="HAMAP-Rule" id="MF_00811"/>
    </source>
</evidence>
<dbReference type="EC" id="2.3.1.117" evidence="1"/>
<dbReference type="EMBL" id="CP000053">
    <property type="protein sequence ID" value="AAY61924.1"/>
    <property type="molecule type" value="Genomic_DNA"/>
</dbReference>
<dbReference type="SMR" id="Q4UKK3"/>
<dbReference type="STRING" id="315456.RF_1073"/>
<dbReference type="KEGG" id="rfe:RF_1073"/>
<dbReference type="eggNOG" id="COG2171">
    <property type="taxonomic scope" value="Bacteria"/>
</dbReference>
<dbReference type="HOGENOM" id="CLU_050859_0_1_5"/>
<dbReference type="OrthoDB" id="9775362at2"/>
<dbReference type="UniPathway" id="UPA00034">
    <property type="reaction ID" value="UER00019"/>
</dbReference>
<dbReference type="Proteomes" id="UP000008548">
    <property type="component" value="Chromosome"/>
</dbReference>
<dbReference type="GO" id="GO:0005737">
    <property type="term" value="C:cytoplasm"/>
    <property type="evidence" value="ECO:0007669"/>
    <property type="project" value="UniProtKB-SubCell"/>
</dbReference>
<dbReference type="GO" id="GO:0008666">
    <property type="term" value="F:2,3,4,5-tetrahydropyridine-2,6-dicarboxylate N-succinyltransferase activity"/>
    <property type="evidence" value="ECO:0007669"/>
    <property type="project" value="UniProtKB-UniRule"/>
</dbReference>
<dbReference type="GO" id="GO:0019877">
    <property type="term" value="P:diaminopimelate biosynthetic process"/>
    <property type="evidence" value="ECO:0007669"/>
    <property type="project" value="UniProtKB-UniRule"/>
</dbReference>
<dbReference type="GO" id="GO:0009089">
    <property type="term" value="P:lysine biosynthetic process via diaminopimelate"/>
    <property type="evidence" value="ECO:0007669"/>
    <property type="project" value="UniProtKB-UniRule"/>
</dbReference>
<dbReference type="CDD" id="cd03350">
    <property type="entry name" value="LbH_THP_succinylT"/>
    <property type="match status" value="1"/>
</dbReference>
<dbReference type="Gene3D" id="2.160.10.10">
    <property type="entry name" value="Hexapeptide repeat proteins"/>
    <property type="match status" value="1"/>
</dbReference>
<dbReference type="Gene3D" id="1.10.166.10">
    <property type="entry name" value="Tetrahydrodipicolinate-N-succinyltransferase, N-terminal domain"/>
    <property type="match status" value="1"/>
</dbReference>
<dbReference type="HAMAP" id="MF_00811">
    <property type="entry name" value="DapD"/>
    <property type="match status" value="1"/>
</dbReference>
<dbReference type="InterPro" id="IPR005664">
    <property type="entry name" value="DapD_Trfase_Hexpep_rpt_fam"/>
</dbReference>
<dbReference type="InterPro" id="IPR001451">
    <property type="entry name" value="Hexapep"/>
</dbReference>
<dbReference type="InterPro" id="IPR023180">
    <property type="entry name" value="THP_succinylTrfase_dom1"/>
</dbReference>
<dbReference type="InterPro" id="IPR037133">
    <property type="entry name" value="THP_succinylTrfase_N_sf"/>
</dbReference>
<dbReference type="InterPro" id="IPR050179">
    <property type="entry name" value="Trans_hexapeptide_repeat"/>
</dbReference>
<dbReference type="InterPro" id="IPR011004">
    <property type="entry name" value="Trimer_LpxA-like_sf"/>
</dbReference>
<dbReference type="NCBIfam" id="TIGR00965">
    <property type="entry name" value="dapD"/>
    <property type="match status" value="1"/>
</dbReference>
<dbReference type="NCBIfam" id="NF008808">
    <property type="entry name" value="PRK11830.1"/>
    <property type="match status" value="1"/>
</dbReference>
<dbReference type="PANTHER" id="PTHR43300:SF10">
    <property type="entry name" value="2,3,4,5-TETRAHYDROPYRIDINE-2,6-DICARBOXYLATE N-ACETYLTRANSFERASE"/>
    <property type="match status" value="1"/>
</dbReference>
<dbReference type="PANTHER" id="PTHR43300">
    <property type="entry name" value="ACETYLTRANSFERASE"/>
    <property type="match status" value="1"/>
</dbReference>
<dbReference type="Pfam" id="PF00132">
    <property type="entry name" value="Hexapep"/>
    <property type="match status" value="1"/>
</dbReference>
<dbReference type="Pfam" id="PF14602">
    <property type="entry name" value="Hexapep_2"/>
    <property type="match status" value="1"/>
</dbReference>
<dbReference type="Pfam" id="PF14805">
    <property type="entry name" value="THDPS_N_2"/>
    <property type="match status" value="1"/>
</dbReference>
<dbReference type="SUPFAM" id="SSF51161">
    <property type="entry name" value="Trimeric LpxA-like enzymes"/>
    <property type="match status" value="1"/>
</dbReference>
<feature type="chain" id="PRO_0000196963" description="2,3,4,5-tetrahydropyridine-2,6-dicarboxylate N-succinyltransferase">
    <location>
        <begin position="1"/>
        <end position="274"/>
    </location>
</feature>
<feature type="binding site" evidence="1">
    <location>
        <position position="106"/>
    </location>
    <ligand>
        <name>substrate</name>
    </ligand>
</feature>
<feature type="binding site" evidence="1">
    <location>
        <position position="143"/>
    </location>
    <ligand>
        <name>substrate</name>
    </ligand>
</feature>
<comment type="catalytic activity">
    <reaction evidence="1">
        <text>(S)-2,3,4,5-tetrahydrodipicolinate + succinyl-CoA + H2O = (S)-2-succinylamino-6-oxoheptanedioate + CoA</text>
        <dbReference type="Rhea" id="RHEA:17325"/>
        <dbReference type="ChEBI" id="CHEBI:15377"/>
        <dbReference type="ChEBI" id="CHEBI:15685"/>
        <dbReference type="ChEBI" id="CHEBI:16845"/>
        <dbReference type="ChEBI" id="CHEBI:57287"/>
        <dbReference type="ChEBI" id="CHEBI:57292"/>
        <dbReference type="EC" id="2.3.1.117"/>
    </reaction>
</comment>
<comment type="pathway">
    <text evidence="1">Amino-acid biosynthesis; L-lysine biosynthesis via DAP pathway; LL-2,6-diaminopimelate from (S)-tetrahydrodipicolinate (succinylase route): step 1/3.</text>
</comment>
<comment type="subunit">
    <text evidence="1">Homotrimer.</text>
</comment>
<comment type="subcellular location">
    <subcellularLocation>
        <location evidence="1">Cytoplasm</location>
    </subcellularLocation>
</comment>
<comment type="similarity">
    <text evidence="1">Belongs to the transferase hexapeptide repeat family.</text>
</comment>
<accession>Q4UKK3</accession>
<reference key="1">
    <citation type="journal article" date="2005" name="PLoS Biol.">
        <title>The genome sequence of Rickettsia felis identifies the first putative conjugative plasmid in an obligate intracellular parasite.</title>
        <authorList>
            <person name="Ogata H."/>
            <person name="Renesto P."/>
            <person name="Audic S."/>
            <person name="Robert C."/>
            <person name="Blanc G."/>
            <person name="Fournier P.-E."/>
            <person name="Parinello H."/>
            <person name="Claverie J.-M."/>
            <person name="Raoult D."/>
        </authorList>
    </citation>
    <scope>NUCLEOTIDE SEQUENCE [LARGE SCALE GENOMIC DNA]</scope>
    <source>
        <strain>ATCC VR-1525 / URRWXCal2</strain>
    </source>
</reference>
<name>DAPD_RICFE</name>
<protein>
    <recommendedName>
        <fullName evidence="1">2,3,4,5-tetrahydropyridine-2,6-dicarboxylate N-succinyltransferase</fullName>
        <ecNumber evidence="1">2.3.1.117</ecNumber>
    </recommendedName>
    <alternativeName>
        <fullName evidence="1">Tetrahydrodipicolinate N-succinyltransferase</fullName>
        <shortName evidence="1">THDP succinyltransferase</shortName>
        <shortName evidence="1">THP succinyltransferase</shortName>
        <shortName evidence="1">Tetrahydropicolinate succinylase</shortName>
    </alternativeName>
</protein>
<sequence>MSSLIKEIEEAWQIKDKLFQDSSKLITLKKTLNDIIESLNQGTIRVCEKKENSWEVNEWVKKAILLYFITTESQLYNNNYNSWYDKVAPKFSADTDKNIFKEAAIRKVPGAVVRTGTYIAKNVVIMPSFINIGAYIDEGTMIDTWATIGSCAQIGKNCHISGGTGIGGVLEPLQAKPVIIEDNCFIGARSEIAEGVIVEEGAVISMGVFIGSSTKIIYRDTGEIIYGRIPAYSVVVPGVLPAKEAGKPGLYCVVIIKQVDKATRAKVSINDLLR</sequence>
<keyword id="KW-0012">Acyltransferase</keyword>
<keyword id="KW-0028">Amino-acid biosynthesis</keyword>
<keyword id="KW-0963">Cytoplasm</keyword>
<keyword id="KW-0220">Diaminopimelate biosynthesis</keyword>
<keyword id="KW-0457">Lysine biosynthesis</keyword>
<keyword id="KW-0677">Repeat</keyword>
<keyword id="KW-0808">Transferase</keyword>